<feature type="transit peptide" description="Mitochondrion" evidence="2">
    <location>
        <begin position="1"/>
        <end position="29"/>
    </location>
</feature>
<feature type="chain" id="PRO_0000338592" description="Mitochondrial intermediate peptidase">
    <location>
        <begin position="30"/>
        <end position="786"/>
    </location>
</feature>
<feature type="active site" evidence="3">
    <location>
        <position position="568"/>
    </location>
</feature>
<feature type="binding site" evidence="3">
    <location>
        <position position="567"/>
    </location>
    <ligand>
        <name>Zn(2+)</name>
        <dbReference type="ChEBI" id="CHEBI:29105"/>
        <note>catalytic</note>
    </ligand>
</feature>
<feature type="binding site" evidence="3">
    <location>
        <position position="571"/>
    </location>
    <ligand>
        <name>Zn(2+)</name>
        <dbReference type="ChEBI" id="CHEBI:29105"/>
        <note>catalytic</note>
    </ligand>
</feature>
<feature type="binding site" evidence="3">
    <location>
        <position position="574"/>
    </location>
    <ligand>
        <name>Zn(2+)</name>
        <dbReference type="ChEBI" id="CHEBI:29105"/>
        <note>catalytic</note>
    </ligand>
</feature>
<proteinExistence type="inferred from homology"/>
<keyword id="KW-0378">Hydrolase</keyword>
<keyword id="KW-0479">Metal-binding</keyword>
<keyword id="KW-0482">Metalloprotease</keyword>
<keyword id="KW-0496">Mitochondrion</keyword>
<keyword id="KW-0645">Protease</keyword>
<keyword id="KW-1185">Reference proteome</keyword>
<keyword id="KW-0809">Transit peptide</keyword>
<keyword id="KW-0862">Zinc</keyword>
<sequence length="786" mass="90517">MSSILLRSYRHHAKVWTRPSSKSSFIRSLASRSNPTSSFEHVRRVFDDDKYYQDFNNGTLSRKIFSGPRTGLFKNEKLTTPQGLIDFSGQCLTEAQTLVDTMIREAETSDQGKIHYIRRLDQLSDILCRVIDVAEFIRVAHPNSKWTHAAQQTHELMFEYMNQLNTNVQLHTILGNILADKSITSKLSSEEIMVGEYLKQDFERSGIYMEPHTRENFVALTQEISVLGSHFNNGIHELKDYWCEISQQEYEAIDNADLKREIRRFQQKSPRSSRNSVYIPLAGSLPYSILQRCSMESVRRKVWIALHNASEEQISTLNLFLKYRATLSKMLGYESFAHYQLEHKMAKNPENVLTFLENLQRKMVDGENSGLISELESLYAMSNHWKPGASKSDIIHAIQPWDRDYLLHKLQEEKKETQLDDNISEYLSVGTIMSGLSQLFHSIYSIELLPEPSASGETWASQVRKIKVFDNETQSTLGFLYLDFWSPNVLPSHFTIVCSRQLNKDLGEKVEVMKPLVQLDETESHQLPVISLVCNFHQGNSFIGRFAGLETSKPTLLTLDQVDTIFHEMGHAMHSMIGRTKLQNLSGTRCSTDFVELPSVLMESFSKDPRVLGRIARHYSTNELLPHDILAKHQHYRNVLENSETYMQSKMAMLDQVLHGKSIVKQLEMARDDIDSTTMYHSLEKELKVFSDQWSTWHGKFPHLFSYGAVYFSYLFDRAIAEKIWKSLFQNDPWSREAGTTYKEAILKWGGTRDPWHCLADALSNQELSKGDEKAMRIIGGETKDL</sequence>
<evidence type="ECO:0000250" key="1"/>
<evidence type="ECO:0000255" key="2"/>
<evidence type="ECO:0000255" key="3">
    <source>
        <dbReference type="PROSITE-ProRule" id="PRU10095"/>
    </source>
</evidence>
<evidence type="ECO:0000305" key="4"/>
<accession>A5DI46</accession>
<name>PMIP_PICGU</name>
<reference key="1">
    <citation type="journal article" date="2009" name="Nature">
        <title>Evolution of pathogenicity and sexual reproduction in eight Candida genomes.</title>
        <authorList>
            <person name="Butler G."/>
            <person name="Rasmussen M.D."/>
            <person name="Lin M.F."/>
            <person name="Santos M.A.S."/>
            <person name="Sakthikumar S."/>
            <person name="Munro C.A."/>
            <person name="Rheinbay E."/>
            <person name="Grabherr M."/>
            <person name="Forche A."/>
            <person name="Reedy J.L."/>
            <person name="Agrafioti I."/>
            <person name="Arnaud M.B."/>
            <person name="Bates S."/>
            <person name="Brown A.J.P."/>
            <person name="Brunke S."/>
            <person name="Costanzo M.C."/>
            <person name="Fitzpatrick D.A."/>
            <person name="de Groot P.W.J."/>
            <person name="Harris D."/>
            <person name="Hoyer L.L."/>
            <person name="Hube B."/>
            <person name="Klis F.M."/>
            <person name="Kodira C."/>
            <person name="Lennard N."/>
            <person name="Logue M.E."/>
            <person name="Martin R."/>
            <person name="Neiman A.M."/>
            <person name="Nikolaou E."/>
            <person name="Quail M.A."/>
            <person name="Quinn J."/>
            <person name="Santos M.C."/>
            <person name="Schmitzberger F.F."/>
            <person name="Sherlock G."/>
            <person name="Shah P."/>
            <person name="Silverstein K.A.T."/>
            <person name="Skrzypek M.S."/>
            <person name="Soll D."/>
            <person name="Staggs R."/>
            <person name="Stansfield I."/>
            <person name="Stumpf M.P.H."/>
            <person name="Sudbery P.E."/>
            <person name="Srikantha T."/>
            <person name="Zeng Q."/>
            <person name="Berman J."/>
            <person name="Berriman M."/>
            <person name="Heitman J."/>
            <person name="Gow N.A.R."/>
            <person name="Lorenz M.C."/>
            <person name="Birren B.W."/>
            <person name="Kellis M."/>
            <person name="Cuomo C.A."/>
        </authorList>
    </citation>
    <scope>NUCLEOTIDE SEQUENCE [LARGE SCALE GENOMIC DNA]</scope>
    <source>
        <strain>ATCC 6260 / CBS 566 / DSM 6381 / JCM 1539 / NBRC 10279 / NRRL Y-324</strain>
    </source>
</reference>
<comment type="function">
    <text evidence="1">Cleaves proteins, imported into the mitochondrion, to their mature size. While most mitochondrial precursor proteins are processed to the mature form in one step by mitochondrial processing peptidase (MPP), the sequential cleavage by MIP of an octapeptide after initial processing by MPP is a required step for a subgroup of nuclear-encoded precursor proteins destined for the matrix or the inner membrane (By similarity).</text>
</comment>
<comment type="catalytic activity">
    <reaction>
        <text>Release of an N-terminal octapeptide as second stage of processing of some proteins imported into the mitochondrion.</text>
        <dbReference type="EC" id="3.4.24.59"/>
    </reaction>
</comment>
<comment type="cofactor">
    <cofactor evidence="1">
        <name>Zn(2+)</name>
        <dbReference type="ChEBI" id="CHEBI:29105"/>
    </cofactor>
    <text evidence="1">Binds 1 zinc ion.</text>
</comment>
<comment type="subcellular location">
    <subcellularLocation>
        <location evidence="1">Mitochondrion matrix</location>
    </subcellularLocation>
</comment>
<comment type="similarity">
    <text evidence="4">Belongs to the peptidase M3 family.</text>
</comment>
<dbReference type="EC" id="3.4.24.59"/>
<dbReference type="EMBL" id="CH408157">
    <property type="protein sequence ID" value="EDK38849.2"/>
    <property type="molecule type" value="Genomic_DNA"/>
</dbReference>
<dbReference type="RefSeq" id="XP_001485218.1">
    <property type="nucleotide sequence ID" value="XM_001485168.1"/>
</dbReference>
<dbReference type="SMR" id="A5DI46"/>
<dbReference type="FunCoup" id="A5DI46">
    <property type="interactions" value="649"/>
</dbReference>
<dbReference type="STRING" id="294746.A5DI46"/>
<dbReference type="GeneID" id="5127052"/>
<dbReference type="KEGG" id="pgu:PGUG_02947"/>
<dbReference type="VEuPathDB" id="FungiDB:PGUG_02947"/>
<dbReference type="eggNOG" id="KOG2090">
    <property type="taxonomic scope" value="Eukaryota"/>
</dbReference>
<dbReference type="HOGENOM" id="CLU_001805_0_0_1"/>
<dbReference type="InParanoid" id="A5DI46"/>
<dbReference type="OMA" id="ALMFEYM"/>
<dbReference type="OrthoDB" id="17530at2759"/>
<dbReference type="Proteomes" id="UP000001997">
    <property type="component" value="Unassembled WGS sequence"/>
</dbReference>
<dbReference type="GO" id="GO:0005759">
    <property type="term" value="C:mitochondrial matrix"/>
    <property type="evidence" value="ECO:0007669"/>
    <property type="project" value="UniProtKB-SubCell"/>
</dbReference>
<dbReference type="GO" id="GO:0046872">
    <property type="term" value="F:metal ion binding"/>
    <property type="evidence" value="ECO:0007669"/>
    <property type="project" value="UniProtKB-KW"/>
</dbReference>
<dbReference type="GO" id="GO:0004222">
    <property type="term" value="F:metalloendopeptidase activity"/>
    <property type="evidence" value="ECO:0007669"/>
    <property type="project" value="UniProtKB-EC"/>
</dbReference>
<dbReference type="GO" id="GO:0006879">
    <property type="term" value="P:intracellular iron ion homeostasis"/>
    <property type="evidence" value="ECO:0007669"/>
    <property type="project" value="EnsemblFungi"/>
</dbReference>
<dbReference type="GO" id="GO:0006518">
    <property type="term" value="P:peptide metabolic process"/>
    <property type="evidence" value="ECO:0007669"/>
    <property type="project" value="TreeGrafter"/>
</dbReference>
<dbReference type="GO" id="GO:0006627">
    <property type="term" value="P:protein processing involved in protein targeting to mitochondrion"/>
    <property type="evidence" value="ECO:0007669"/>
    <property type="project" value="EnsemblFungi"/>
</dbReference>
<dbReference type="GO" id="GO:0050821">
    <property type="term" value="P:protein stabilization"/>
    <property type="evidence" value="ECO:0007669"/>
    <property type="project" value="EnsemblFungi"/>
</dbReference>
<dbReference type="CDD" id="cd06457">
    <property type="entry name" value="M3A_MIP"/>
    <property type="match status" value="1"/>
</dbReference>
<dbReference type="Gene3D" id="3.40.390.10">
    <property type="entry name" value="Collagenase (Catalytic Domain)"/>
    <property type="match status" value="1"/>
</dbReference>
<dbReference type="Gene3D" id="1.10.1370.10">
    <property type="entry name" value="Neurolysin, domain 3"/>
    <property type="match status" value="1"/>
</dbReference>
<dbReference type="InterPro" id="IPR033851">
    <property type="entry name" value="M3A_MIP"/>
</dbReference>
<dbReference type="InterPro" id="IPR024079">
    <property type="entry name" value="MetalloPept_cat_dom_sf"/>
</dbReference>
<dbReference type="InterPro" id="IPR024077">
    <property type="entry name" value="Neurolysin/TOP_dom2"/>
</dbReference>
<dbReference type="InterPro" id="IPR045090">
    <property type="entry name" value="Pept_M3A_M3B"/>
</dbReference>
<dbReference type="InterPro" id="IPR001567">
    <property type="entry name" value="Pept_M3A_M3B_dom"/>
</dbReference>
<dbReference type="PANTHER" id="PTHR11804:SF79">
    <property type="entry name" value="MITOCHONDRIAL INTERMEDIATE PEPTIDASE"/>
    <property type="match status" value="1"/>
</dbReference>
<dbReference type="PANTHER" id="PTHR11804">
    <property type="entry name" value="PROTEASE M3 THIMET OLIGOPEPTIDASE-RELATED"/>
    <property type="match status" value="1"/>
</dbReference>
<dbReference type="Pfam" id="PF01432">
    <property type="entry name" value="Peptidase_M3"/>
    <property type="match status" value="1"/>
</dbReference>
<dbReference type="SUPFAM" id="SSF55486">
    <property type="entry name" value="Metalloproteases ('zincins'), catalytic domain"/>
    <property type="match status" value="1"/>
</dbReference>
<dbReference type="PROSITE" id="PS00142">
    <property type="entry name" value="ZINC_PROTEASE"/>
    <property type="match status" value="1"/>
</dbReference>
<organism>
    <name type="scientific">Meyerozyma guilliermondii (strain ATCC 6260 / CBS 566 / DSM 6381 / JCM 1539 / NBRC 10279 / NRRL Y-324)</name>
    <name type="common">Yeast</name>
    <name type="synonym">Candida guilliermondii</name>
    <dbReference type="NCBI Taxonomy" id="294746"/>
    <lineage>
        <taxon>Eukaryota</taxon>
        <taxon>Fungi</taxon>
        <taxon>Dikarya</taxon>
        <taxon>Ascomycota</taxon>
        <taxon>Saccharomycotina</taxon>
        <taxon>Pichiomycetes</taxon>
        <taxon>Debaryomycetaceae</taxon>
        <taxon>Meyerozyma</taxon>
    </lineage>
</organism>
<gene>
    <name type="primary">OCT1</name>
    <name type="ORF">PGUG_02947</name>
</gene>
<protein>
    <recommendedName>
        <fullName>Mitochondrial intermediate peptidase</fullName>
        <shortName>MIP</shortName>
        <ecNumber>3.4.24.59</ecNumber>
    </recommendedName>
    <alternativeName>
        <fullName>Octapeptidyl aminopeptidase</fullName>
    </alternativeName>
</protein>